<protein>
    <recommendedName>
        <fullName evidence="1">DNA gyrase inhibitor YacG</fullName>
    </recommendedName>
</protein>
<name>YACG_ECOHS</name>
<organism>
    <name type="scientific">Escherichia coli O9:H4 (strain HS)</name>
    <dbReference type="NCBI Taxonomy" id="331112"/>
    <lineage>
        <taxon>Bacteria</taxon>
        <taxon>Pseudomonadati</taxon>
        <taxon>Pseudomonadota</taxon>
        <taxon>Gammaproteobacteria</taxon>
        <taxon>Enterobacterales</taxon>
        <taxon>Enterobacteriaceae</taxon>
        <taxon>Escherichia</taxon>
    </lineage>
</organism>
<gene>
    <name evidence="1" type="primary">yacG</name>
    <name type="ordered locus">EcHS_A0106</name>
</gene>
<evidence type="ECO:0000255" key="1">
    <source>
        <dbReference type="HAMAP-Rule" id="MF_00649"/>
    </source>
</evidence>
<evidence type="ECO:0000256" key="2">
    <source>
        <dbReference type="SAM" id="MobiDB-lite"/>
    </source>
</evidence>
<feature type="chain" id="PRO_1000061465" description="DNA gyrase inhibitor YacG">
    <location>
        <begin position="1"/>
        <end position="65"/>
    </location>
</feature>
<feature type="region of interest" description="Disordered" evidence="2">
    <location>
        <begin position="45"/>
        <end position="65"/>
    </location>
</feature>
<feature type="compositionally biased region" description="Acidic residues" evidence="2">
    <location>
        <begin position="54"/>
        <end position="65"/>
    </location>
</feature>
<feature type="binding site" evidence="1">
    <location>
        <position position="9"/>
    </location>
    <ligand>
        <name>Zn(2+)</name>
        <dbReference type="ChEBI" id="CHEBI:29105"/>
    </ligand>
</feature>
<feature type="binding site" evidence="1">
    <location>
        <position position="12"/>
    </location>
    <ligand>
        <name>Zn(2+)</name>
        <dbReference type="ChEBI" id="CHEBI:29105"/>
    </ligand>
</feature>
<feature type="binding site" evidence="1">
    <location>
        <position position="28"/>
    </location>
    <ligand>
        <name>Zn(2+)</name>
        <dbReference type="ChEBI" id="CHEBI:29105"/>
    </ligand>
</feature>
<feature type="binding site" evidence="1">
    <location>
        <position position="32"/>
    </location>
    <ligand>
        <name>Zn(2+)</name>
        <dbReference type="ChEBI" id="CHEBI:29105"/>
    </ligand>
</feature>
<sequence>MSETITVNCPTCGKTVVWGEISPFRPFCSKRCQLIDLGEWAAEEKRIPSSGDLSESDDWSEEPKQ</sequence>
<proteinExistence type="inferred from homology"/>
<keyword id="KW-0479">Metal-binding</keyword>
<keyword id="KW-0862">Zinc</keyword>
<accession>A7ZW52</accession>
<dbReference type="EMBL" id="CP000802">
    <property type="protein sequence ID" value="ABV04506.1"/>
    <property type="molecule type" value="Genomic_DNA"/>
</dbReference>
<dbReference type="RefSeq" id="WP_000005042.1">
    <property type="nucleotide sequence ID" value="NC_009800.1"/>
</dbReference>
<dbReference type="SMR" id="A7ZW52"/>
<dbReference type="GeneID" id="93777334"/>
<dbReference type="KEGG" id="ecx:EcHS_A0106"/>
<dbReference type="HOGENOM" id="CLU_178280_3_1_6"/>
<dbReference type="GO" id="GO:0008657">
    <property type="term" value="F:DNA topoisomerase type II (double strand cut, ATP-hydrolyzing) inhibitor activity"/>
    <property type="evidence" value="ECO:0007669"/>
    <property type="project" value="UniProtKB-UniRule"/>
</dbReference>
<dbReference type="GO" id="GO:0008270">
    <property type="term" value="F:zinc ion binding"/>
    <property type="evidence" value="ECO:0007669"/>
    <property type="project" value="UniProtKB-UniRule"/>
</dbReference>
<dbReference type="GO" id="GO:0006355">
    <property type="term" value="P:regulation of DNA-templated transcription"/>
    <property type="evidence" value="ECO:0007669"/>
    <property type="project" value="InterPro"/>
</dbReference>
<dbReference type="FunFam" id="3.30.50.10:FF:000026">
    <property type="entry name" value="DNA gyrase inhibitor YacG"/>
    <property type="match status" value="1"/>
</dbReference>
<dbReference type="Gene3D" id="3.30.50.10">
    <property type="entry name" value="Erythroid Transcription Factor GATA-1, subunit A"/>
    <property type="match status" value="1"/>
</dbReference>
<dbReference type="HAMAP" id="MF_00649">
    <property type="entry name" value="DNA_gyrase_inhibitor_YacG"/>
    <property type="match status" value="1"/>
</dbReference>
<dbReference type="InterPro" id="IPR005584">
    <property type="entry name" value="DNA_gyrase_inhibitor_YacG"/>
</dbReference>
<dbReference type="InterPro" id="IPR013088">
    <property type="entry name" value="Znf_NHR/GATA"/>
</dbReference>
<dbReference type="NCBIfam" id="NF001638">
    <property type="entry name" value="PRK00418.1"/>
    <property type="match status" value="1"/>
</dbReference>
<dbReference type="PANTHER" id="PTHR36150">
    <property type="entry name" value="DNA GYRASE INHIBITOR YACG"/>
    <property type="match status" value="1"/>
</dbReference>
<dbReference type="PANTHER" id="PTHR36150:SF1">
    <property type="entry name" value="DNA GYRASE INHIBITOR YACG"/>
    <property type="match status" value="1"/>
</dbReference>
<dbReference type="Pfam" id="PF03884">
    <property type="entry name" value="YacG"/>
    <property type="match status" value="1"/>
</dbReference>
<dbReference type="SUPFAM" id="SSF57716">
    <property type="entry name" value="Glucocorticoid receptor-like (DNA-binding domain)"/>
    <property type="match status" value="1"/>
</dbReference>
<reference key="1">
    <citation type="journal article" date="2008" name="J. Bacteriol.">
        <title>The pangenome structure of Escherichia coli: comparative genomic analysis of E. coli commensal and pathogenic isolates.</title>
        <authorList>
            <person name="Rasko D.A."/>
            <person name="Rosovitz M.J."/>
            <person name="Myers G.S.A."/>
            <person name="Mongodin E.F."/>
            <person name="Fricke W.F."/>
            <person name="Gajer P."/>
            <person name="Crabtree J."/>
            <person name="Sebaihia M."/>
            <person name="Thomson N.R."/>
            <person name="Chaudhuri R."/>
            <person name="Henderson I.R."/>
            <person name="Sperandio V."/>
            <person name="Ravel J."/>
        </authorList>
    </citation>
    <scope>NUCLEOTIDE SEQUENCE [LARGE SCALE GENOMIC DNA]</scope>
    <source>
        <strain>HS</strain>
    </source>
</reference>
<comment type="function">
    <text evidence="1">Inhibits all the catalytic activities of DNA gyrase by preventing its interaction with DNA. Acts by binding directly to the C-terminal domain of GyrB, which probably disrupts DNA binding by the gyrase.</text>
</comment>
<comment type="cofactor">
    <cofactor evidence="1">
        <name>Zn(2+)</name>
        <dbReference type="ChEBI" id="CHEBI:29105"/>
    </cofactor>
    <text evidence="1">Binds 1 zinc ion.</text>
</comment>
<comment type="subunit">
    <text evidence="1">Interacts with GyrB.</text>
</comment>
<comment type="similarity">
    <text evidence="1">Belongs to the DNA gyrase inhibitor YacG family.</text>
</comment>